<name>NPM3_MOUSE</name>
<organism>
    <name type="scientific">Mus musculus</name>
    <name type="common">Mouse</name>
    <dbReference type="NCBI Taxonomy" id="10090"/>
    <lineage>
        <taxon>Eukaryota</taxon>
        <taxon>Metazoa</taxon>
        <taxon>Chordata</taxon>
        <taxon>Craniata</taxon>
        <taxon>Vertebrata</taxon>
        <taxon>Euteleostomi</taxon>
        <taxon>Mammalia</taxon>
        <taxon>Eutheria</taxon>
        <taxon>Euarchontoglires</taxon>
        <taxon>Glires</taxon>
        <taxon>Rodentia</taxon>
        <taxon>Myomorpha</taxon>
        <taxon>Muroidea</taxon>
        <taxon>Muridae</taxon>
        <taxon>Murinae</taxon>
        <taxon>Mus</taxon>
        <taxon>Mus</taxon>
    </lineage>
</organism>
<evidence type="ECO:0000250" key="1">
    <source>
        <dbReference type="UniProtKB" id="O75607"/>
    </source>
</evidence>
<evidence type="ECO:0000269" key="2">
    <source>
    </source>
</evidence>
<evidence type="ECO:0000305" key="3"/>
<evidence type="ECO:0007744" key="4">
    <source>
    </source>
</evidence>
<proteinExistence type="evidence at protein level"/>
<protein>
    <recommendedName>
        <fullName>Nucleoplasmin-3</fullName>
    </recommendedName>
</protein>
<accession>Q9CPP0</accession>
<accession>Q3UJ58</accession>
<feature type="initiator methionine" description="Removed" evidence="1">
    <location>
        <position position="1"/>
    </location>
</feature>
<feature type="chain" id="PRO_0000219490" description="Nucleoplasmin-3">
    <location>
        <begin position="2"/>
        <end position="175"/>
    </location>
</feature>
<feature type="modified residue" description="N-acetylalanine" evidence="1">
    <location>
        <position position="2"/>
    </location>
</feature>
<feature type="modified residue" description="Phosphoserine" evidence="1">
    <location>
        <position position="16"/>
    </location>
</feature>
<feature type="modified residue" description="Omega-N-methylarginine" evidence="1">
    <location>
        <position position="27"/>
    </location>
</feature>
<feature type="modified residue" description="Phosphoserine" evidence="4">
    <location>
        <position position="147"/>
    </location>
</feature>
<feature type="modified residue" description="Phosphoserine" evidence="1">
    <location>
        <position position="151"/>
    </location>
</feature>
<dbReference type="EMBL" id="U64450">
    <property type="protein sequence ID" value="AAC53205.1"/>
    <property type="molecule type" value="mRNA"/>
</dbReference>
<dbReference type="EMBL" id="AK011749">
    <property type="protein sequence ID" value="BAB27818.1"/>
    <property type="molecule type" value="mRNA"/>
</dbReference>
<dbReference type="EMBL" id="AK146603">
    <property type="protein sequence ID" value="BAE27297.1"/>
    <property type="molecule type" value="mRNA"/>
</dbReference>
<dbReference type="EMBL" id="BC048491">
    <property type="protein sequence ID" value="AAH48491.1"/>
    <property type="molecule type" value="mRNA"/>
</dbReference>
<dbReference type="CCDS" id="CCDS29865.1"/>
<dbReference type="RefSeq" id="NP_032749.1">
    <property type="nucleotide sequence ID" value="NM_008723.2"/>
</dbReference>
<dbReference type="SMR" id="Q9CPP0"/>
<dbReference type="BioGRID" id="201824">
    <property type="interactions" value="8"/>
</dbReference>
<dbReference type="CORUM" id="Q9CPP0"/>
<dbReference type="FunCoup" id="Q9CPP0">
    <property type="interactions" value="1887"/>
</dbReference>
<dbReference type="IntAct" id="Q9CPP0">
    <property type="interactions" value="1"/>
</dbReference>
<dbReference type="MINT" id="Q9CPP0"/>
<dbReference type="STRING" id="10090.ENSMUSP00000069578"/>
<dbReference type="GlyGen" id="Q9CPP0">
    <property type="glycosylation" value="1 site, 1 O-linked glycan (1 site)"/>
</dbReference>
<dbReference type="iPTMnet" id="Q9CPP0"/>
<dbReference type="PhosphoSitePlus" id="Q9CPP0"/>
<dbReference type="SwissPalm" id="Q9CPP0"/>
<dbReference type="jPOST" id="Q9CPP0"/>
<dbReference type="PaxDb" id="10090-ENSMUSP00000069578"/>
<dbReference type="PeptideAtlas" id="Q9CPP0"/>
<dbReference type="ProteomicsDB" id="253004"/>
<dbReference type="Pumba" id="Q9CPP0"/>
<dbReference type="Antibodypedia" id="31335">
    <property type="antibodies" value="119 antibodies from 21 providers"/>
</dbReference>
<dbReference type="DNASU" id="18150"/>
<dbReference type="Ensembl" id="ENSMUST00000070215.8">
    <property type="protein sequence ID" value="ENSMUSP00000069578.8"/>
    <property type="gene ID" value="ENSMUSG00000056209.8"/>
</dbReference>
<dbReference type="GeneID" id="18150"/>
<dbReference type="KEGG" id="mmu:18150"/>
<dbReference type="UCSC" id="uc008hrk.1">
    <property type="organism name" value="mouse"/>
</dbReference>
<dbReference type="AGR" id="MGI:894653"/>
<dbReference type="CTD" id="10360"/>
<dbReference type="MGI" id="MGI:894653">
    <property type="gene designation" value="Npm3"/>
</dbReference>
<dbReference type="VEuPathDB" id="HostDB:ENSMUSG00000056209"/>
<dbReference type="eggNOG" id="ENOG502S1E6">
    <property type="taxonomic scope" value="Eukaryota"/>
</dbReference>
<dbReference type="GeneTree" id="ENSGT00940000158796"/>
<dbReference type="HOGENOM" id="CLU_058838_1_0_1"/>
<dbReference type="InParanoid" id="Q9CPP0"/>
<dbReference type="OMA" id="QIVCINN"/>
<dbReference type="OrthoDB" id="9900353at2759"/>
<dbReference type="PhylomeDB" id="Q9CPP0"/>
<dbReference type="TreeFam" id="TF327704"/>
<dbReference type="BioGRID-ORCS" id="18150">
    <property type="hits" value="2 hits in 79 CRISPR screens"/>
</dbReference>
<dbReference type="ChiTaRS" id="Npm3">
    <property type="organism name" value="mouse"/>
</dbReference>
<dbReference type="PRO" id="PR:Q9CPP0"/>
<dbReference type="Proteomes" id="UP000000589">
    <property type="component" value="Chromosome 19"/>
</dbReference>
<dbReference type="RNAct" id="Q9CPP0">
    <property type="molecule type" value="protein"/>
</dbReference>
<dbReference type="Bgee" id="ENSMUSG00000056209">
    <property type="expression patterns" value="Expressed in epiblast (generic) and 66 other cell types or tissues"/>
</dbReference>
<dbReference type="GO" id="GO:0015629">
    <property type="term" value="C:actin cytoskeleton"/>
    <property type="evidence" value="ECO:0007669"/>
    <property type="project" value="Ensembl"/>
</dbReference>
<dbReference type="GO" id="GO:0005829">
    <property type="term" value="C:cytosol"/>
    <property type="evidence" value="ECO:0007669"/>
    <property type="project" value="Ensembl"/>
</dbReference>
<dbReference type="GO" id="GO:0005730">
    <property type="term" value="C:nucleolus"/>
    <property type="evidence" value="ECO:0000314"/>
    <property type="project" value="MGI"/>
</dbReference>
<dbReference type="GO" id="GO:0006364">
    <property type="term" value="P:rRNA processing"/>
    <property type="evidence" value="ECO:0000314"/>
    <property type="project" value="MGI"/>
</dbReference>
<dbReference type="GO" id="GO:0009303">
    <property type="term" value="P:rRNA transcription"/>
    <property type="evidence" value="ECO:0000314"/>
    <property type="project" value="MGI"/>
</dbReference>
<dbReference type="FunFam" id="2.60.120.340:FF:000002">
    <property type="entry name" value="Nucleophosmin/nucleoplasmin 3"/>
    <property type="match status" value="1"/>
</dbReference>
<dbReference type="Gene3D" id="2.60.120.340">
    <property type="entry name" value="Nucleoplasmin core domain"/>
    <property type="match status" value="1"/>
</dbReference>
<dbReference type="InterPro" id="IPR004301">
    <property type="entry name" value="Nucleoplasmin"/>
</dbReference>
<dbReference type="InterPro" id="IPR024057">
    <property type="entry name" value="Nucleoplasmin_core_dom"/>
</dbReference>
<dbReference type="InterPro" id="IPR036824">
    <property type="entry name" value="Nucleoplasmin_core_dom_sf"/>
</dbReference>
<dbReference type="PANTHER" id="PTHR22747">
    <property type="entry name" value="NUCLEOPLASMIN"/>
    <property type="match status" value="1"/>
</dbReference>
<dbReference type="PANTHER" id="PTHR22747:SF13">
    <property type="entry name" value="NUCLEOPLASMIN-3"/>
    <property type="match status" value="1"/>
</dbReference>
<dbReference type="Pfam" id="PF03066">
    <property type="entry name" value="Nucleoplasmin"/>
    <property type="match status" value="1"/>
</dbReference>
<dbReference type="SUPFAM" id="SSF69203">
    <property type="entry name" value="Nucleoplasmin-like core domain"/>
    <property type="match status" value="1"/>
</dbReference>
<sequence length="175" mass="19023">MAAGAAAALAFLNQESRARAGGVGGLRVPAPVTMDSFFFGCELSGHTRSFTFKVEEEDDTEHVLALNMLCLTEGATDECNVVEVVARDHDNQEIAVPVANLRLSCQPMLSVDDFQLQPPVTFRLKSGSGPVRITGRHQIVCINNDLSEEESDDESEEDEIKLCGILPAKKHRGRP</sequence>
<keyword id="KW-0007">Acetylation</keyword>
<keyword id="KW-0143">Chaperone</keyword>
<keyword id="KW-0488">Methylation</keyword>
<keyword id="KW-0539">Nucleus</keyword>
<keyword id="KW-0597">Phosphoprotein</keyword>
<keyword id="KW-1185">Reference proteome</keyword>
<comment type="function">
    <text evidence="1">Plays a role in the regulation of diverse cellular processes such as ribosome biogenesis, chromatin remodeling or protein chaperoning. Modulates the histone chaperone function and the RNA-binding activity of nucleolar phosphoprotein B23/NPM. Efficiently mediates chromatin remodeling when included in a pentamer containing NPM3 and NPM.</text>
</comment>
<comment type="subunit">
    <text evidence="1">Interacts with NPM (via N-terminus). Forms a pentamer with NPM at a ratio 4:1 (NPM3/NPM). Two pentamers form a decamer.</text>
</comment>
<comment type="subcellular location">
    <subcellularLocation>
        <location evidence="1">Nucleus</location>
    </subcellularLocation>
    <subcellularLocation>
        <location evidence="1">Nucleus</location>
        <location evidence="1">Nucleolus</location>
    </subcellularLocation>
    <text evidence="1">Mainly found in the granular component of the nucleolus.</text>
</comment>
<comment type="tissue specificity">
    <text evidence="2">Predominantly expressed in testis.</text>
</comment>
<comment type="PTM">
    <text evidence="3">Phosphorylated.</text>
</comment>
<comment type="similarity">
    <text evidence="3">Belongs to the nucleoplasmin family.</text>
</comment>
<reference key="1">
    <citation type="journal article" date="1997" name="Genomics">
        <title>Npm3: a novel, widely expressed gene encoding a protein related to the molecular chaperones nucleoplasmin and nucleophosmin.</title>
        <authorList>
            <person name="MacArthur C.A."/>
            <person name="Shackleford G.M."/>
        </authorList>
    </citation>
    <scope>NUCLEOTIDE SEQUENCE [MRNA]</scope>
</reference>
<reference key="2">
    <citation type="journal article" date="2005" name="Science">
        <title>The transcriptional landscape of the mammalian genome.</title>
        <authorList>
            <person name="Carninci P."/>
            <person name="Kasukawa T."/>
            <person name="Katayama S."/>
            <person name="Gough J."/>
            <person name="Frith M.C."/>
            <person name="Maeda N."/>
            <person name="Oyama R."/>
            <person name="Ravasi T."/>
            <person name="Lenhard B."/>
            <person name="Wells C."/>
            <person name="Kodzius R."/>
            <person name="Shimokawa K."/>
            <person name="Bajic V.B."/>
            <person name="Brenner S.E."/>
            <person name="Batalov S."/>
            <person name="Forrest A.R."/>
            <person name="Zavolan M."/>
            <person name="Davis M.J."/>
            <person name="Wilming L.G."/>
            <person name="Aidinis V."/>
            <person name="Allen J.E."/>
            <person name="Ambesi-Impiombato A."/>
            <person name="Apweiler R."/>
            <person name="Aturaliya R.N."/>
            <person name="Bailey T.L."/>
            <person name="Bansal M."/>
            <person name="Baxter L."/>
            <person name="Beisel K.W."/>
            <person name="Bersano T."/>
            <person name="Bono H."/>
            <person name="Chalk A.M."/>
            <person name="Chiu K.P."/>
            <person name="Choudhary V."/>
            <person name="Christoffels A."/>
            <person name="Clutterbuck D.R."/>
            <person name="Crowe M.L."/>
            <person name="Dalla E."/>
            <person name="Dalrymple B.P."/>
            <person name="de Bono B."/>
            <person name="Della Gatta G."/>
            <person name="di Bernardo D."/>
            <person name="Down T."/>
            <person name="Engstrom P."/>
            <person name="Fagiolini M."/>
            <person name="Faulkner G."/>
            <person name="Fletcher C.F."/>
            <person name="Fukushima T."/>
            <person name="Furuno M."/>
            <person name="Futaki S."/>
            <person name="Gariboldi M."/>
            <person name="Georgii-Hemming P."/>
            <person name="Gingeras T.R."/>
            <person name="Gojobori T."/>
            <person name="Green R.E."/>
            <person name="Gustincich S."/>
            <person name="Harbers M."/>
            <person name="Hayashi Y."/>
            <person name="Hensch T.K."/>
            <person name="Hirokawa N."/>
            <person name="Hill D."/>
            <person name="Huminiecki L."/>
            <person name="Iacono M."/>
            <person name="Ikeo K."/>
            <person name="Iwama A."/>
            <person name="Ishikawa T."/>
            <person name="Jakt M."/>
            <person name="Kanapin A."/>
            <person name="Katoh M."/>
            <person name="Kawasawa Y."/>
            <person name="Kelso J."/>
            <person name="Kitamura H."/>
            <person name="Kitano H."/>
            <person name="Kollias G."/>
            <person name="Krishnan S.P."/>
            <person name="Kruger A."/>
            <person name="Kummerfeld S.K."/>
            <person name="Kurochkin I.V."/>
            <person name="Lareau L.F."/>
            <person name="Lazarevic D."/>
            <person name="Lipovich L."/>
            <person name="Liu J."/>
            <person name="Liuni S."/>
            <person name="McWilliam S."/>
            <person name="Madan Babu M."/>
            <person name="Madera M."/>
            <person name="Marchionni L."/>
            <person name="Matsuda H."/>
            <person name="Matsuzawa S."/>
            <person name="Miki H."/>
            <person name="Mignone F."/>
            <person name="Miyake S."/>
            <person name="Morris K."/>
            <person name="Mottagui-Tabar S."/>
            <person name="Mulder N."/>
            <person name="Nakano N."/>
            <person name="Nakauchi H."/>
            <person name="Ng P."/>
            <person name="Nilsson R."/>
            <person name="Nishiguchi S."/>
            <person name="Nishikawa S."/>
            <person name="Nori F."/>
            <person name="Ohara O."/>
            <person name="Okazaki Y."/>
            <person name="Orlando V."/>
            <person name="Pang K.C."/>
            <person name="Pavan W.J."/>
            <person name="Pavesi G."/>
            <person name="Pesole G."/>
            <person name="Petrovsky N."/>
            <person name="Piazza S."/>
            <person name="Reed J."/>
            <person name="Reid J.F."/>
            <person name="Ring B.Z."/>
            <person name="Ringwald M."/>
            <person name="Rost B."/>
            <person name="Ruan Y."/>
            <person name="Salzberg S.L."/>
            <person name="Sandelin A."/>
            <person name="Schneider C."/>
            <person name="Schoenbach C."/>
            <person name="Sekiguchi K."/>
            <person name="Semple C.A."/>
            <person name="Seno S."/>
            <person name="Sessa L."/>
            <person name="Sheng Y."/>
            <person name="Shibata Y."/>
            <person name="Shimada H."/>
            <person name="Shimada K."/>
            <person name="Silva D."/>
            <person name="Sinclair B."/>
            <person name="Sperling S."/>
            <person name="Stupka E."/>
            <person name="Sugiura K."/>
            <person name="Sultana R."/>
            <person name="Takenaka Y."/>
            <person name="Taki K."/>
            <person name="Tammoja K."/>
            <person name="Tan S.L."/>
            <person name="Tang S."/>
            <person name="Taylor M.S."/>
            <person name="Tegner J."/>
            <person name="Teichmann S.A."/>
            <person name="Ueda H.R."/>
            <person name="van Nimwegen E."/>
            <person name="Verardo R."/>
            <person name="Wei C.L."/>
            <person name="Yagi K."/>
            <person name="Yamanishi H."/>
            <person name="Zabarovsky E."/>
            <person name="Zhu S."/>
            <person name="Zimmer A."/>
            <person name="Hide W."/>
            <person name="Bult C."/>
            <person name="Grimmond S.M."/>
            <person name="Teasdale R.D."/>
            <person name="Liu E.T."/>
            <person name="Brusic V."/>
            <person name="Quackenbush J."/>
            <person name="Wahlestedt C."/>
            <person name="Mattick J.S."/>
            <person name="Hume D.A."/>
            <person name="Kai C."/>
            <person name="Sasaki D."/>
            <person name="Tomaru Y."/>
            <person name="Fukuda S."/>
            <person name="Kanamori-Katayama M."/>
            <person name="Suzuki M."/>
            <person name="Aoki J."/>
            <person name="Arakawa T."/>
            <person name="Iida J."/>
            <person name="Imamura K."/>
            <person name="Itoh M."/>
            <person name="Kato T."/>
            <person name="Kawaji H."/>
            <person name="Kawagashira N."/>
            <person name="Kawashima T."/>
            <person name="Kojima M."/>
            <person name="Kondo S."/>
            <person name="Konno H."/>
            <person name="Nakano K."/>
            <person name="Ninomiya N."/>
            <person name="Nishio T."/>
            <person name="Okada M."/>
            <person name="Plessy C."/>
            <person name="Shibata K."/>
            <person name="Shiraki T."/>
            <person name="Suzuki S."/>
            <person name="Tagami M."/>
            <person name="Waki K."/>
            <person name="Watahiki A."/>
            <person name="Okamura-Oho Y."/>
            <person name="Suzuki H."/>
            <person name="Kawai J."/>
            <person name="Hayashizaki Y."/>
        </authorList>
    </citation>
    <scope>NUCLEOTIDE SEQUENCE [LARGE SCALE MRNA]</scope>
    <source>
        <strain>C57BL/6J</strain>
        <tissue>Embryo</tissue>
        <tissue>Kidney</tissue>
    </source>
</reference>
<reference key="3">
    <citation type="journal article" date="2004" name="Genome Res.">
        <title>The status, quality, and expansion of the NIH full-length cDNA project: the Mammalian Gene Collection (MGC).</title>
        <authorList>
            <consortium name="The MGC Project Team"/>
        </authorList>
    </citation>
    <scope>NUCLEOTIDE SEQUENCE [LARGE SCALE MRNA]</scope>
    <source>
        <tissue>Testis</tissue>
    </source>
</reference>
<reference key="4">
    <citation type="journal article" date="2010" name="Cell">
        <title>A tissue-specific atlas of mouse protein phosphorylation and expression.</title>
        <authorList>
            <person name="Huttlin E.L."/>
            <person name="Jedrychowski M.P."/>
            <person name="Elias J.E."/>
            <person name="Goswami T."/>
            <person name="Rad R."/>
            <person name="Beausoleil S.A."/>
            <person name="Villen J."/>
            <person name="Haas W."/>
            <person name="Sowa M.E."/>
            <person name="Gygi S.P."/>
        </authorList>
    </citation>
    <scope>PHOSPHORYLATION [LARGE SCALE ANALYSIS] AT SER-147</scope>
    <scope>IDENTIFICATION BY MASS SPECTROMETRY [LARGE SCALE ANALYSIS]</scope>
    <source>
        <tissue>Brown adipose tissue</tissue>
        <tissue>Kidney</tissue>
        <tissue>Liver</tissue>
        <tissue>Lung</tissue>
        <tissue>Pancreas</tissue>
        <tissue>Spleen</tissue>
        <tissue>Testis</tissue>
    </source>
</reference>
<reference key="5">
    <citation type="journal article" date="2017" name="Mol. Cell">
        <title>Histone variant H2A.L.2 guides transition protein-dependent protamine assembly in male germ cells.</title>
        <authorList>
            <person name="Barral S."/>
            <person name="Morozumi Y."/>
            <person name="Tanaka H."/>
            <person name="Montellier E."/>
            <person name="Govin J."/>
            <person name="de Dieuleveult M."/>
            <person name="Charbonnier G."/>
            <person name="Coute Y."/>
            <person name="Puthier D."/>
            <person name="Buchou T."/>
            <person name="Boussouar F."/>
            <person name="Urahama T."/>
            <person name="Fenaille F."/>
            <person name="Curtet S."/>
            <person name="Hery P."/>
            <person name="Fernandez-Nunez N."/>
            <person name="Shiota H."/>
            <person name="Gerard M."/>
            <person name="Rousseaux S."/>
            <person name="Kurumizaka H."/>
            <person name="Khochbin S."/>
        </authorList>
    </citation>
    <scope>TISSUE SPECIFICITY</scope>
</reference>
<gene>
    <name type="primary">Npm3</name>
</gene>